<name>NPIID_TRIVH</name>
<sequence>MQLVAALAALGALVAPAVAYPHAPMNETLVDVQLTAVGNTMVKATITNKGDSVLNMLKFNTIMDENPTRKVMVFQDGAEVPFTGMMPRYLMSDLTEEFFTTLAPQASVEHSFDIATTHDLSAGGKYVISASGAIPTAEEYSTTITSTALYESNELHMEIDGTQAAAVEQAMKFTPEMQSIHSRALQKRTKIVGGSCNQNTLRATQNALGNSARLAQAASRAASQNAAKFQEYFRTNDANAKQRVIARLNSVARESSSANGGSTTYYCSDTVGGCKPRVLAYTLPSRNLVVNCPIYYNLPPLTKQCHAQDQATTTLHEFTHNPAVASPHCQDYAYGYQQCISLPAAKAVQNADNYALFANGMFYSLFTIIF</sequence>
<protein>
    <recommendedName>
        <fullName>Probable neutral protease 2 homolog TRV_02539</fullName>
        <ecNumber>3.4.24.39</ecNumber>
    </recommendedName>
    <alternativeName>
        <fullName>Deuterolysin TRV_02539</fullName>
    </alternativeName>
</protein>
<accession>D4D616</accession>
<keyword id="KW-0165">Cleavage on pair of basic residues</keyword>
<keyword id="KW-1015">Disulfide bond</keyword>
<keyword id="KW-0378">Hydrolase</keyword>
<keyword id="KW-0479">Metal-binding</keyword>
<keyword id="KW-0482">Metalloprotease</keyword>
<keyword id="KW-0645">Protease</keyword>
<keyword id="KW-0964">Secreted</keyword>
<keyword id="KW-0732">Signal</keyword>
<keyword id="KW-0843">Virulence</keyword>
<keyword id="KW-0862">Zinc</keyword>
<keyword id="KW-0865">Zymogen</keyword>
<reference key="1">
    <citation type="journal article" date="2011" name="Genome Biol.">
        <title>Comparative and functional genomics provide insights into the pathogenicity of dermatophytic fungi.</title>
        <authorList>
            <person name="Burmester A."/>
            <person name="Shelest E."/>
            <person name="Gloeckner G."/>
            <person name="Heddergott C."/>
            <person name="Schindler S."/>
            <person name="Staib P."/>
            <person name="Heidel A."/>
            <person name="Felder M."/>
            <person name="Petzold A."/>
            <person name="Szafranski K."/>
            <person name="Feuermann M."/>
            <person name="Pedruzzi I."/>
            <person name="Priebe S."/>
            <person name="Groth M."/>
            <person name="Winkler R."/>
            <person name="Li W."/>
            <person name="Kniemeyer O."/>
            <person name="Schroeckh V."/>
            <person name="Hertweck C."/>
            <person name="Hube B."/>
            <person name="White T.C."/>
            <person name="Platzer M."/>
            <person name="Guthke R."/>
            <person name="Heitman J."/>
            <person name="Woestemeyer J."/>
            <person name="Zipfel P.F."/>
            <person name="Monod M."/>
            <person name="Brakhage A.A."/>
        </authorList>
    </citation>
    <scope>NUCLEOTIDE SEQUENCE [LARGE SCALE GENOMIC DNA]</scope>
    <source>
        <strain>HKI 0517</strain>
    </source>
</reference>
<feature type="signal peptide" evidence="2">
    <location>
        <begin position="1"/>
        <end position="19"/>
    </location>
</feature>
<feature type="propeptide" id="PRO_0000397752" evidence="1">
    <location>
        <begin position="20"/>
        <end position="188"/>
    </location>
</feature>
<feature type="chain" id="PRO_0000397753" description="Probable neutral protease 2 homolog TRV_02539">
    <location>
        <begin position="189"/>
        <end position="370"/>
    </location>
</feature>
<feature type="active site" evidence="3">
    <location>
        <position position="317"/>
    </location>
</feature>
<feature type="binding site" evidence="3">
    <location>
        <position position="316"/>
    </location>
    <ligand>
        <name>Zn(2+)</name>
        <dbReference type="ChEBI" id="CHEBI:29105"/>
        <note>catalytic</note>
    </ligand>
</feature>
<feature type="binding site" evidence="3">
    <location>
        <position position="320"/>
    </location>
    <ligand>
        <name>Zn(2+)</name>
        <dbReference type="ChEBI" id="CHEBI:29105"/>
        <note>catalytic</note>
    </ligand>
</feature>
<feature type="binding site" evidence="3">
    <location>
        <position position="331"/>
    </location>
    <ligand>
        <name>Zn(2+)</name>
        <dbReference type="ChEBI" id="CHEBI:29105"/>
        <note>catalytic</note>
    </ligand>
</feature>
<feature type="disulfide bond" evidence="1">
    <location>
        <begin position="196"/>
        <end position="267"/>
    </location>
</feature>
<feature type="disulfide bond" evidence="1">
    <location>
        <begin position="274"/>
        <end position="292"/>
    </location>
</feature>
<comment type="function">
    <text evidence="1">Probable secreted metalloprotease that shows high activities on basic nuclear substrates such as histone and protamine (By similarity). May be involved in virulence.</text>
</comment>
<comment type="catalytic activity">
    <reaction>
        <text>Preferential cleavage of bonds with hydrophobic residues in P1'. Also 3-Asn-|-Gln-4 and 8-Gly-|-Ser-9 bonds in insulin B chain.</text>
        <dbReference type="EC" id="3.4.24.39"/>
    </reaction>
</comment>
<comment type="cofactor">
    <cofactor evidence="1">
        <name>Zn(2+)</name>
        <dbReference type="ChEBI" id="CHEBI:29105"/>
    </cofactor>
    <text evidence="1">Binds 1 zinc ion per subunit.</text>
</comment>
<comment type="subcellular location">
    <subcellularLocation>
        <location evidence="4">Secreted</location>
    </subcellularLocation>
</comment>
<comment type="similarity">
    <text evidence="4">Belongs to the peptidase M35 family.</text>
</comment>
<evidence type="ECO:0000250" key="1"/>
<evidence type="ECO:0000255" key="2"/>
<evidence type="ECO:0000255" key="3">
    <source>
        <dbReference type="PROSITE-ProRule" id="PRU10095"/>
    </source>
</evidence>
<evidence type="ECO:0000305" key="4"/>
<organism>
    <name type="scientific">Trichophyton verrucosum (strain HKI 0517)</name>
    <dbReference type="NCBI Taxonomy" id="663202"/>
    <lineage>
        <taxon>Eukaryota</taxon>
        <taxon>Fungi</taxon>
        <taxon>Dikarya</taxon>
        <taxon>Ascomycota</taxon>
        <taxon>Pezizomycotina</taxon>
        <taxon>Eurotiomycetes</taxon>
        <taxon>Eurotiomycetidae</taxon>
        <taxon>Onygenales</taxon>
        <taxon>Arthrodermataceae</taxon>
        <taxon>Trichophyton</taxon>
    </lineage>
</organism>
<dbReference type="EC" id="3.4.24.39"/>
<dbReference type="EMBL" id="ACYE01000131">
    <property type="protein sequence ID" value="EFE42695.1"/>
    <property type="molecule type" value="Genomic_DNA"/>
</dbReference>
<dbReference type="RefSeq" id="XP_003023313.1">
    <property type="nucleotide sequence ID" value="XM_003023267.1"/>
</dbReference>
<dbReference type="SMR" id="D4D616"/>
<dbReference type="MEROPS" id="M35.001"/>
<dbReference type="GeneID" id="9583332"/>
<dbReference type="KEGG" id="tve:TRV_02539"/>
<dbReference type="HOGENOM" id="CLU_039313_1_0_1"/>
<dbReference type="OrthoDB" id="3712at34384"/>
<dbReference type="Proteomes" id="UP000008383">
    <property type="component" value="Unassembled WGS sequence"/>
</dbReference>
<dbReference type="GO" id="GO:0005576">
    <property type="term" value="C:extracellular region"/>
    <property type="evidence" value="ECO:0007669"/>
    <property type="project" value="UniProtKB-SubCell"/>
</dbReference>
<dbReference type="GO" id="GO:0046872">
    <property type="term" value="F:metal ion binding"/>
    <property type="evidence" value="ECO:0007669"/>
    <property type="project" value="UniProtKB-KW"/>
</dbReference>
<dbReference type="GO" id="GO:0004222">
    <property type="term" value="F:metalloendopeptidase activity"/>
    <property type="evidence" value="ECO:0007669"/>
    <property type="project" value="InterPro"/>
</dbReference>
<dbReference type="GO" id="GO:0006508">
    <property type="term" value="P:proteolysis"/>
    <property type="evidence" value="ECO:0007669"/>
    <property type="project" value="UniProtKB-KW"/>
</dbReference>
<dbReference type="CDD" id="cd11008">
    <property type="entry name" value="M35_deuterolysin_like"/>
    <property type="match status" value="1"/>
</dbReference>
<dbReference type="Gene3D" id="2.60.40.2970">
    <property type="match status" value="1"/>
</dbReference>
<dbReference type="Gene3D" id="3.40.390.10">
    <property type="entry name" value="Collagenase (Catalytic Domain)"/>
    <property type="match status" value="1"/>
</dbReference>
<dbReference type="InterPro" id="IPR050414">
    <property type="entry name" value="Fungal_M35_metalloproteases"/>
</dbReference>
<dbReference type="InterPro" id="IPR024079">
    <property type="entry name" value="MetalloPept_cat_dom_sf"/>
</dbReference>
<dbReference type="InterPro" id="IPR001384">
    <property type="entry name" value="Peptidase_M35"/>
</dbReference>
<dbReference type="PANTHER" id="PTHR37016">
    <property type="match status" value="1"/>
</dbReference>
<dbReference type="PANTHER" id="PTHR37016:SF3">
    <property type="entry name" value="NEUTRAL PROTEASE 2-RELATED"/>
    <property type="match status" value="1"/>
</dbReference>
<dbReference type="Pfam" id="PF02102">
    <property type="entry name" value="Peptidase_M35"/>
    <property type="match status" value="1"/>
</dbReference>
<dbReference type="PRINTS" id="PR00768">
    <property type="entry name" value="DEUTEROLYSIN"/>
</dbReference>
<dbReference type="SUPFAM" id="SSF55486">
    <property type="entry name" value="Metalloproteases ('zincins'), catalytic domain"/>
    <property type="match status" value="1"/>
</dbReference>
<dbReference type="PROSITE" id="PS00142">
    <property type="entry name" value="ZINC_PROTEASE"/>
    <property type="match status" value="1"/>
</dbReference>
<proteinExistence type="inferred from homology"/>
<gene>
    <name type="ORF">TRV_02539</name>
</gene>